<dbReference type="EC" id="4.1.1.49"/>
<dbReference type="EMBL" id="U09241">
    <property type="protein sequence ID" value="AAA79122.1"/>
    <property type="molecule type" value="mRNA"/>
</dbReference>
<dbReference type="PIR" id="S52988">
    <property type="entry name" value="S52988"/>
</dbReference>
<dbReference type="SMR" id="P49292"/>
<dbReference type="UniPathway" id="UPA00138"/>
<dbReference type="GO" id="GO:0005829">
    <property type="term" value="C:cytosol"/>
    <property type="evidence" value="ECO:0007669"/>
    <property type="project" value="TreeGrafter"/>
</dbReference>
<dbReference type="GO" id="GO:0005524">
    <property type="term" value="F:ATP binding"/>
    <property type="evidence" value="ECO:0007669"/>
    <property type="project" value="UniProtKB-KW"/>
</dbReference>
<dbReference type="GO" id="GO:0004612">
    <property type="term" value="F:phosphoenolpyruvate carboxykinase (ATP) activity"/>
    <property type="evidence" value="ECO:0007669"/>
    <property type="project" value="UniProtKB-EC"/>
</dbReference>
<dbReference type="GO" id="GO:0006094">
    <property type="term" value="P:gluconeogenesis"/>
    <property type="evidence" value="ECO:0007669"/>
    <property type="project" value="UniProtKB-UniPathway"/>
</dbReference>
<dbReference type="CDD" id="cd00484">
    <property type="entry name" value="PEPCK_ATP"/>
    <property type="match status" value="1"/>
</dbReference>
<dbReference type="FunFam" id="2.170.8.10:FF:000001">
    <property type="entry name" value="Phosphoenolpyruvate carboxykinase (ATP)"/>
    <property type="match status" value="1"/>
</dbReference>
<dbReference type="FunFam" id="3.40.449.10:FF:000009">
    <property type="entry name" value="Uncharacterized protein"/>
    <property type="match status" value="1"/>
</dbReference>
<dbReference type="Gene3D" id="3.90.228.20">
    <property type="match status" value="1"/>
</dbReference>
<dbReference type="Gene3D" id="3.40.449.10">
    <property type="entry name" value="Phosphoenolpyruvate Carboxykinase, domain 1"/>
    <property type="match status" value="1"/>
</dbReference>
<dbReference type="Gene3D" id="2.170.8.10">
    <property type="entry name" value="Phosphoenolpyruvate Carboxykinase, domain 2"/>
    <property type="match status" value="1"/>
</dbReference>
<dbReference type="HAMAP" id="MF_00453">
    <property type="entry name" value="PEPCK_ATP"/>
    <property type="match status" value="1"/>
</dbReference>
<dbReference type="InterPro" id="IPR001272">
    <property type="entry name" value="PEP_carboxykinase_ATP"/>
</dbReference>
<dbReference type="InterPro" id="IPR013035">
    <property type="entry name" value="PEP_carboxykinase_C"/>
</dbReference>
<dbReference type="InterPro" id="IPR008210">
    <property type="entry name" value="PEP_carboxykinase_N"/>
</dbReference>
<dbReference type="InterPro" id="IPR015994">
    <property type="entry name" value="PEPCK_ATP_CS"/>
</dbReference>
<dbReference type="NCBIfam" id="TIGR00224">
    <property type="entry name" value="pckA"/>
    <property type="match status" value="1"/>
</dbReference>
<dbReference type="NCBIfam" id="NF006820">
    <property type="entry name" value="PRK09344.1-2"/>
    <property type="match status" value="1"/>
</dbReference>
<dbReference type="NCBIfam" id="NF006821">
    <property type="entry name" value="PRK09344.1-3"/>
    <property type="match status" value="1"/>
</dbReference>
<dbReference type="PANTHER" id="PTHR30031:SF0">
    <property type="entry name" value="PHOSPHOENOLPYRUVATE CARBOXYKINASE (ATP)"/>
    <property type="match status" value="1"/>
</dbReference>
<dbReference type="PANTHER" id="PTHR30031">
    <property type="entry name" value="PHOSPHOENOLPYRUVATE CARBOXYKINASE ATP"/>
    <property type="match status" value="1"/>
</dbReference>
<dbReference type="Pfam" id="PF01293">
    <property type="entry name" value="PEPCK_ATP"/>
    <property type="match status" value="1"/>
</dbReference>
<dbReference type="PIRSF" id="PIRSF006294">
    <property type="entry name" value="PEP_crbxkin"/>
    <property type="match status" value="1"/>
</dbReference>
<dbReference type="SUPFAM" id="SSF68923">
    <property type="entry name" value="PEP carboxykinase N-terminal domain"/>
    <property type="match status" value="1"/>
</dbReference>
<dbReference type="SUPFAM" id="SSF53795">
    <property type="entry name" value="PEP carboxykinase-like"/>
    <property type="match status" value="1"/>
</dbReference>
<dbReference type="PROSITE" id="PS00532">
    <property type="entry name" value="PEPCK_ATP"/>
    <property type="match status" value="1"/>
</dbReference>
<sequence>MASPNGGVTTYDYDDSDSAAPVRAQTIEELHSLQRKAAATAKDSASPLQSISASLASTAREYGPNLVKGDPEAKGAPPAPVKHQQAAAAAAIAASDSSLKFTHVLYNLSPAELYEQAFGQKKSSFITSTGALATLSGAKTGRSPRDKRVVKDDTTAQELWWGKGSPNIEMDERQFVINRERALDFLNSLDKVYVNDQFLNWDPENRIKVRIITSRAYHALFMHNMCIRPTEEELETFGTPDFTIYNAGEFPANRYANYMTSSTSINISLARREMVILGTQYAGEMKKGLFGVMHYLMPKRGILSLHSGCNMGKEGDVALFFGLSGTGKTTLSTDHNRLLIGDDEHCWSDNGVSNIEGGCYAKCIDLSKEKEPDIWNAITFGTVLENVVFNERTREVDYADKSITENTRAAYPIEFIPNAKIPCVGPHPKNVILLACDAYGVLPPVSKLNLAQTMYHFISGYTAIVAGTEDGVKEPTATFSACFGAAFIMYHPTKYAAMLAEKMQKYGRTGWLVNTGWSGGRYGVGNRIKLPYTRKIIDAIHSGELLTANYKKTEVFGLEIPTEINGVPSEILDPVNTWTDKAAYKETLLKLAGLFKNNFEVFASYKIGDDNSLTEQILAAGPNF</sequence>
<accession>P49292</accession>
<name>PCKA1_UROPA</name>
<comment type="catalytic activity">
    <reaction>
        <text>oxaloacetate + ATP = phosphoenolpyruvate + ADP + CO2</text>
        <dbReference type="Rhea" id="RHEA:18617"/>
        <dbReference type="ChEBI" id="CHEBI:16452"/>
        <dbReference type="ChEBI" id="CHEBI:16526"/>
        <dbReference type="ChEBI" id="CHEBI:30616"/>
        <dbReference type="ChEBI" id="CHEBI:58702"/>
        <dbReference type="ChEBI" id="CHEBI:456216"/>
        <dbReference type="EC" id="4.1.1.49"/>
    </reaction>
</comment>
<comment type="pathway">
    <text>Carbohydrate biosynthesis; gluconeogenesis.</text>
</comment>
<comment type="subunit">
    <text>Homohexamer.</text>
</comment>
<comment type="subcellular location">
    <subcellularLocation>
        <location>Cytoplasm</location>
    </subcellularLocation>
</comment>
<comment type="tissue specificity">
    <text>Green leaves but not in roots or etiolated shoots.</text>
</comment>
<comment type="similarity">
    <text evidence="3">Belongs to the phosphoenolpyruvate carboxykinase (ATP) family.</text>
</comment>
<organism>
    <name type="scientific">Urochloa panicoides</name>
    <name type="common">Panic liverseed grass</name>
    <dbReference type="NCBI Taxonomy" id="37563"/>
    <lineage>
        <taxon>Eukaryota</taxon>
        <taxon>Viridiplantae</taxon>
        <taxon>Streptophyta</taxon>
        <taxon>Embryophyta</taxon>
        <taxon>Tracheophyta</taxon>
        <taxon>Spermatophyta</taxon>
        <taxon>Magnoliopsida</taxon>
        <taxon>Liliopsida</taxon>
        <taxon>Poales</taxon>
        <taxon>Poaceae</taxon>
        <taxon>PACMAD clade</taxon>
        <taxon>Panicoideae</taxon>
        <taxon>Panicodae</taxon>
        <taxon>Paniceae</taxon>
        <taxon>Melinidinae</taxon>
        <taxon>Urochloa</taxon>
    </lineage>
</organism>
<keyword id="KW-0067">ATP-binding</keyword>
<keyword id="KW-0963">Cytoplasm</keyword>
<keyword id="KW-0210">Decarboxylase</keyword>
<keyword id="KW-0903">Direct protein sequencing</keyword>
<keyword id="KW-0312">Gluconeogenesis</keyword>
<keyword id="KW-0456">Lyase</keyword>
<keyword id="KW-0547">Nucleotide-binding</keyword>
<protein>
    <recommendedName>
        <fullName>Phosphoenolpyruvate carboxykinase (ATP) 1</fullName>
        <ecNumber>4.1.1.49</ecNumber>
    </recommendedName>
</protein>
<reference key="1">
    <citation type="journal article" date="1995" name="Plant Mol. Biol.">
        <title>Isolation and sequence analysis of cDNAs encoding phosphoenolpyruvate carboxykinase from the PCK-type C4 grass Urochloa panicoides.</title>
        <authorList>
            <person name="Finnegan P.M."/>
            <person name="Burnell J.N."/>
        </authorList>
    </citation>
    <scope>NUCLEOTIDE SEQUENCE [MRNA]</scope>
    <scope>PROTEIN SEQUENCE OF 57-82</scope>
    <source>
        <strain>CQ2798</strain>
        <tissue>Leaf</tissue>
    </source>
</reference>
<feature type="chain" id="PRO_0000203865" description="Phosphoenolpyruvate carboxykinase (ATP) 1">
    <location>
        <begin position="1"/>
        <end position="624"/>
    </location>
</feature>
<feature type="region of interest" description="Disordered" evidence="2">
    <location>
        <begin position="1"/>
        <end position="22"/>
    </location>
</feature>
<feature type="binding site" evidence="1">
    <location>
        <begin position="322"/>
        <end position="329"/>
    </location>
    <ligand>
        <name>ATP</name>
        <dbReference type="ChEBI" id="CHEBI:30616"/>
    </ligand>
</feature>
<evidence type="ECO:0000255" key="1"/>
<evidence type="ECO:0000256" key="2">
    <source>
        <dbReference type="SAM" id="MobiDB-lite"/>
    </source>
</evidence>
<evidence type="ECO:0000305" key="3"/>
<proteinExistence type="evidence at protein level"/>
<gene>
    <name type="primary">PCK1</name>
</gene>